<keyword id="KW-0342">GTP-binding</keyword>
<keyword id="KW-0547">Nucleotide-binding</keyword>
<keyword id="KW-0548">Nucleotidyltransferase</keyword>
<keyword id="KW-0808">Transferase</keyword>
<evidence type="ECO:0000255" key="1">
    <source>
        <dbReference type="HAMAP-Rule" id="MF_02114"/>
    </source>
</evidence>
<protein>
    <recommendedName>
        <fullName evidence="1">2-phospho-L-lactate guanylyltransferase</fullName>
        <shortName evidence="1">LP guanylyltransferase</shortName>
        <ecNumber evidence="1">2.7.7.68</ecNumber>
    </recommendedName>
</protein>
<sequence>MQVVVPFAATEPKTRLADVLTPAERTAFARAMLADVLTAVVEAGHEPTVLATAPLDLETLDLEAAVRDAGSVAVDDRPLTEAVNARLPERGDGGDDGTHIDPVAVVMADLALATADALEALFSAAADVAVVPGRGAGTNALVVDHPEFRVDYHGASYLDHREIAHDVGATLETVDSFRLGTDIDEPADLVEVLVHGTETDRAPARLREFGFELERTDGRVTVARLEESRPK</sequence>
<proteinExistence type="inferred from homology"/>
<comment type="function">
    <text evidence="1">Guanylyltransferase that catalyzes the activation of (2S)-2-phospholactate (2-PL) as (2S)-lactyl-2-diphospho-5'-guanosine, via the condensation of 2-PL with GTP. It is involved in the biosynthesis of coenzyme F420, a hydride carrier cofactor.</text>
</comment>
<comment type="catalytic activity">
    <reaction evidence="1">
        <text>(2S)-2-phospholactate + GTP + H(+) = (2S)-lactyl-2-diphospho-5'-guanosine + diphosphate</text>
        <dbReference type="Rhea" id="RHEA:63424"/>
        <dbReference type="ChEBI" id="CHEBI:15378"/>
        <dbReference type="ChEBI" id="CHEBI:33019"/>
        <dbReference type="ChEBI" id="CHEBI:37565"/>
        <dbReference type="ChEBI" id="CHEBI:59435"/>
        <dbReference type="ChEBI" id="CHEBI:59906"/>
        <dbReference type="EC" id="2.7.7.68"/>
    </reaction>
</comment>
<comment type="pathway">
    <text evidence="1">Cofactor biosynthesis; coenzyme F420 biosynthesis.</text>
</comment>
<comment type="subunit">
    <text evidence="1">Homodimer.</text>
</comment>
<comment type="similarity">
    <text evidence="1">Belongs to the CofC family.</text>
</comment>
<accession>D2RWE9</accession>
<name>COFC_HALTV</name>
<gene>
    <name evidence="1" type="primary">cofC</name>
    <name type="ordered locus">Htur_0640</name>
</gene>
<dbReference type="EC" id="2.7.7.68" evidence="1"/>
<dbReference type="EMBL" id="CP001860">
    <property type="protein sequence ID" value="ADB59538.1"/>
    <property type="molecule type" value="Genomic_DNA"/>
</dbReference>
<dbReference type="RefSeq" id="WP_012941859.1">
    <property type="nucleotide sequence ID" value="NC_013743.1"/>
</dbReference>
<dbReference type="SMR" id="D2RWE9"/>
<dbReference type="STRING" id="543526.Htur_0640"/>
<dbReference type="GeneID" id="8741222"/>
<dbReference type="KEGG" id="htu:Htur_0640"/>
<dbReference type="eggNOG" id="arCOG04472">
    <property type="taxonomic scope" value="Archaea"/>
</dbReference>
<dbReference type="HOGENOM" id="CLU_076569_2_0_2"/>
<dbReference type="OrthoDB" id="11179at2157"/>
<dbReference type="UniPathway" id="UPA00071"/>
<dbReference type="Proteomes" id="UP000001903">
    <property type="component" value="Chromosome"/>
</dbReference>
<dbReference type="GO" id="GO:0005525">
    <property type="term" value="F:GTP binding"/>
    <property type="evidence" value="ECO:0007669"/>
    <property type="project" value="UniProtKB-KW"/>
</dbReference>
<dbReference type="GO" id="GO:0043814">
    <property type="term" value="F:phospholactate guanylyltransferase activity"/>
    <property type="evidence" value="ECO:0007669"/>
    <property type="project" value="UniProtKB-EC"/>
</dbReference>
<dbReference type="GO" id="GO:0052645">
    <property type="term" value="P:F420-0 metabolic process"/>
    <property type="evidence" value="ECO:0007669"/>
    <property type="project" value="UniProtKB-UniRule"/>
</dbReference>
<dbReference type="Gene3D" id="6.10.140.50">
    <property type="match status" value="1"/>
</dbReference>
<dbReference type="Gene3D" id="3.90.550.10">
    <property type="entry name" value="Spore Coat Polysaccharide Biosynthesis Protein SpsA, Chain A"/>
    <property type="match status" value="1"/>
</dbReference>
<dbReference type="HAMAP" id="MF_02114">
    <property type="entry name" value="CofC"/>
    <property type="match status" value="1"/>
</dbReference>
<dbReference type="InterPro" id="IPR002835">
    <property type="entry name" value="CofC"/>
</dbReference>
<dbReference type="InterPro" id="IPR029044">
    <property type="entry name" value="Nucleotide-diphossugar_trans"/>
</dbReference>
<dbReference type="NCBIfam" id="TIGR03552">
    <property type="entry name" value="F420_cofC"/>
    <property type="match status" value="1"/>
</dbReference>
<dbReference type="PANTHER" id="PTHR40392">
    <property type="entry name" value="2-PHOSPHO-L-LACTATE GUANYLYLTRANSFERASE"/>
    <property type="match status" value="1"/>
</dbReference>
<dbReference type="PANTHER" id="PTHR40392:SF1">
    <property type="entry name" value="2-PHOSPHO-L-LACTATE GUANYLYLTRANSFERASE"/>
    <property type="match status" value="1"/>
</dbReference>
<dbReference type="Pfam" id="PF01983">
    <property type="entry name" value="CofC"/>
    <property type="match status" value="1"/>
</dbReference>
<dbReference type="SUPFAM" id="SSF53448">
    <property type="entry name" value="Nucleotide-diphospho-sugar transferases"/>
    <property type="match status" value="1"/>
</dbReference>
<organism>
    <name type="scientific">Haloterrigena turkmenica (strain ATCC 51198 / DSM 5511 / JCM 9101 / NCIMB 13204 / VKM B-1734 / 4k)</name>
    <name type="common">Halococcus turkmenicus</name>
    <dbReference type="NCBI Taxonomy" id="543526"/>
    <lineage>
        <taxon>Archaea</taxon>
        <taxon>Methanobacteriati</taxon>
        <taxon>Methanobacteriota</taxon>
        <taxon>Stenosarchaea group</taxon>
        <taxon>Halobacteria</taxon>
        <taxon>Halobacteriales</taxon>
        <taxon>Natrialbaceae</taxon>
        <taxon>Haloterrigena</taxon>
    </lineage>
</organism>
<feature type="chain" id="PRO_0000398733" description="2-phospho-L-lactate guanylyltransferase">
    <location>
        <begin position="1"/>
        <end position="231"/>
    </location>
</feature>
<reference key="1">
    <citation type="journal article" date="2010" name="Stand. Genomic Sci.">
        <title>Complete genome sequence of Haloterrigena turkmenica type strain (4k).</title>
        <authorList>
            <person name="Saunders E."/>
            <person name="Tindall B.J."/>
            <person name="Fahnrich R."/>
            <person name="Lapidus A."/>
            <person name="Copeland A."/>
            <person name="Del Rio T.G."/>
            <person name="Lucas S."/>
            <person name="Chen F."/>
            <person name="Tice H."/>
            <person name="Cheng J.F."/>
            <person name="Han C."/>
            <person name="Detter J.C."/>
            <person name="Bruce D."/>
            <person name="Goodwin L."/>
            <person name="Chain P."/>
            <person name="Pitluck S."/>
            <person name="Pati A."/>
            <person name="Ivanova N."/>
            <person name="Mavromatis K."/>
            <person name="Chen A."/>
            <person name="Palaniappan K."/>
            <person name="Land M."/>
            <person name="Hauser L."/>
            <person name="Chang Y.J."/>
            <person name="Jeffries C.D."/>
            <person name="Brettin T."/>
            <person name="Rohde M."/>
            <person name="Goker M."/>
            <person name="Bristow J."/>
            <person name="Eisen J.A."/>
            <person name="Markowitz V."/>
            <person name="Hugenholtz P."/>
            <person name="Klenk H.P."/>
            <person name="Kyrpides N.C."/>
        </authorList>
    </citation>
    <scope>NUCLEOTIDE SEQUENCE [LARGE SCALE GENOMIC DNA]</scope>
    <source>
        <strain>ATCC 51198 / DSM 5511 / JCM 9101 / NCIMB 13204 / VKM B-1734 / 4k</strain>
    </source>
</reference>